<dbReference type="EMBL" id="AP009377">
    <property type="protein sequence ID" value="BAG16651.1"/>
    <property type="molecule type" value="Genomic_DNA"/>
</dbReference>
<dbReference type="RefSeq" id="YP_001806653.1">
    <property type="nucleotide sequence ID" value="NC_010548.1"/>
</dbReference>
<dbReference type="SMR" id="B1VKE0"/>
<dbReference type="GeneID" id="6166611"/>
<dbReference type="KEGG" id="cjf:6166611"/>
<dbReference type="OrthoDB" id="512793at2759"/>
<dbReference type="GO" id="GO:0009507">
    <property type="term" value="C:chloroplast"/>
    <property type="evidence" value="ECO:0007669"/>
    <property type="project" value="UniProtKB-SubCell"/>
</dbReference>
<dbReference type="GO" id="GO:1990904">
    <property type="term" value="C:ribonucleoprotein complex"/>
    <property type="evidence" value="ECO:0007669"/>
    <property type="project" value="UniProtKB-KW"/>
</dbReference>
<dbReference type="GO" id="GO:0005840">
    <property type="term" value="C:ribosome"/>
    <property type="evidence" value="ECO:0007669"/>
    <property type="project" value="UniProtKB-KW"/>
</dbReference>
<dbReference type="GO" id="GO:0019843">
    <property type="term" value="F:rRNA binding"/>
    <property type="evidence" value="ECO:0007669"/>
    <property type="project" value="UniProtKB-UniRule"/>
</dbReference>
<dbReference type="GO" id="GO:0003735">
    <property type="term" value="F:structural constituent of ribosome"/>
    <property type="evidence" value="ECO:0007669"/>
    <property type="project" value="InterPro"/>
</dbReference>
<dbReference type="GO" id="GO:0000027">
    <property type="term" value="P:ribosomal large subunit assembly"/>
    <property type="evidence" value="ECO:0007669"/>
    <property type="project" value="UniProtKB-UniRule"/>
</dbReference>
<dbReference type="GO" id="GO:0006412">
    <property type="term" value="P:translation"/>
    <property type="evidence" value="ECO:0007669"/>
    <property type="project" value="InterPro"/>
</dbReference>
<dbReference type="CDD" id="cd07026">
    <property type="entry name" value="Ribosomal_L20"/>
    <property type="match status" value="1"/>
</dbReference>
<dbReference type="FunFam" id="1.10.1900.20:FF:000001">
    <property type="entry name" value="50S ribosomal protein L20"/>
    <property type="match status" value="1"/>
</dbReference>
<dbReference type="Gene3D" id="6.10.160.10">
    <property type="match status" value="1"/>
</dbReference>
<dbReference type="Gene3D" id="1.10.1900.20">
    <property type="entry name" value="Ribosomal protein L20"/>
    <property type="match status" value="1"/>
</dbReference>
<dbReference type="HAMAP" id="MF_00382">
    <property type="entry name" value="Ribosomal_bL20"/>
    <property type="match status" value="1"/>
</dbReference>
<dbReference type="InterPro" id="IPR005813">
    <property type="entry name" value="Ribosomal_bL20"/>
</dbReference>
<dbReference type="InterPro" id="IPR049946">
    <property type="entry name" value="RIBOSOMAL_L20_CS"/>
</dbReference>
<dbReference type="InterPro" id="IPR035566">
    <property type="entry name" value="Ribosomal_protein_bL20_C"/>
</dbReference>
<dbReference type="NCBIfam" id="TIGR01032">
    <property type="entry name" value="rplT_bact"/>
    <property type="match status" value="1"/>
</dbReference>
<dbReference type="PANTHER" id="PTHR10986">
    <property type="entry name" value="39S RIBOSOMAL PROTEIN L20"/>
    <property type="match status" value="1"/>
</dbReference>
<dbReference type="Pfam" id="PF00453">
    <property type="entry name" value="Ribosomal_L20"/>
    <property type="match status" value="1"/>
</dbReference>
<dbReference type="PRINTS" id="PR00062">
    <property type="entry name" value="RIBOSOMALL20"/>
</dbReference>
<dbReference type="SUPFAM" id="SSF74731">
    <property type="entry name" value="Ribosomal protein L20"/>
    <property type="match status" value="1"/>
</dbReference>
<dbReference type="PROSITE" id="PS00937">
    <property type="entry name" value="RIBOSOMAL_L20"/>
    <property type="match status" value="1"/>
</dbReference>
<name>RK20_CRYJA</name>
<protein>
    <recommendedName>
        <fullName evidence="1">Large ribosomal subunit protein bL20c</fullName>
    </recommendedName>
    <alternativeName>
        <fullName evidence="2">50S ribosomal protein L20, chloroplastic</fullName>
    </alternativeName>
</protein>
<evidence type="ECO:0000255" key="1">
    <source>
        <dbReference type="HAMAP-Rule" id="MF_00382"/>
    </source>
</evidence>
<evidence type="ECO:0000305" key="2"/>
<sequence>MTRVKRGYIAKKRRKKILAFVSGSRGAHSKLFRVANQQKSRALVSAHRDRLKRKRDFRRLWITRINAASRANGVSYNKFIQFLYKRQLLTNRRTLAQIAVLNNNCFSMMLENILVS</sequence>
<proteinExistence type="inferred from homology"/>
<feature type="chain" id="PRO_0000355497" description="Large ribosomal subunit protein bL20c">
    <location>
        <begin position="1"/>
        <end position="116"/>
    </location>
</feature>
<organism>
    <name type="scientific">Cryptomeria japonica</name>
    <name type="common">Japanese cedar</name>
    <name type="synonym">Cupressus japonica</name>
    <dbReference type="NCBI Taxonomy" id="3369"/>
    <lineage>
        <taxon>Eukaryota</taxon>
        <taxon>Viridiplantae</taxon>
        <taxon>Streptophyta</taxon>
        <taxon>Embryophyta</taxon>
        <taxon>Tracheophyta</taxon>
        <taxon>Spermatophyta</taxon>
        <taxon>Pinopsida</taxon>
        <taxon>Pinidae</taxon>
        <taxon>Conifers II</taxon>
        <taxon>Cupressales</taxon>
        <taxon>Cupressaceae</taxon>
        <taxon>Cryptomeria</taxon>
    </lineage>
</organism>
<reference key="1">
    <citation type="journal article" date="2008" name="BMC Plant Biol.">
        <title>Complete nucleotide sequence of the Cryptomeria japonica D. Don. chloroplast genome and comparative chloroplast genomics: diversified genomic structure of coniferous species.</title>
        <authorList>
            <person name="Hirao T."/>
            <person name="Watanabe A."/>
            <person name="Kurita M."/>
            <person name="Kondo T."/>
            <person name="Takata K."/>
        </authorList>
    </citation>
    <scope>NUCLEOTIDE SEQUENCE [LARGE SCALE GENOMIC DNA]</scope>
</reference>
<gene>
    <name evidence="1" type="primary">rpl20</name>
</gene>
<keyword id="KW-0150">Chloroplast</keyword>
<keyword id="KW-0934">Plastid</keyword>
<keyword id="KW-0687">Ribonucleoprotein</keyword>
<keyword id="KW-0689">Ribosomal protein</keyword>
<keyword id="KW-0694">RNA-binding</keyword>
<keyword id="KW-0699">rRNA-binding</keyword>
<accession>B1VKE0</accession>
<geneLocation type="chloroplast"/>
<comment type="function">
    <text evidence="1">Binds directly to 23S ribosomal RNA and is necessary for the in vitro assembly process of the 50S ribosomal subunit. It is not involved in the protein synthesizing functions of that subunit.</text>
</comment>
<comment type="subcellular location">
    <subcellularLocation>
        <location>Plastid</location>
        <location>Chloroplast</location>
    </subcellularLocation>
</comment>
<comment type="similarity">
    <text evidence="1">Belongs to the bacterial ribosomal protein bL20 family.</text>
</comment>